<evidence type="ECO:0000250" key="1"/>
<evidence type="ECO:0000250" key="2">
    <source>
        <dbReference type="UniProtKB" id="P04517"/>
    </source>
</evidence>
<evidence type="ECO:0000255" key="3">
    <source>
        <dbReference type="PROSITE-ProRule" id="PRU00539"/>
    </source>
</evidence>
<evidence type="ECO:0000256" key="4">
    <source>
        <dbReference type="SAM" id="MobiDB-lite"/>
    </source>
</evidence>
<evidence type="ECO:0000305" key="5"/>
<sequence>IKKEGLWIPKLEPERVVSILEWDRAAEPEHRLEAICASMIEAWGYDDLLNHIRRFYLWVLDQAPYKQLSAEGKAPYISEVALKSLYTGKPATSCELEVYNKIHQEQHDEFDDSQMKFVFQSDKEKLNVGEQQKSKDKESRQRDQEGENSNRQIIPDRDINAGTTGTFSVPKLKKISGKLSLPKIKGKGLLNLDHLLVYVPNQDDISNNIATQEQLEAWHEGVKNAYEVDDQQMEIICNGLMVWCIENGTSGDLQGEWTMMDGEKQVTFPLKPILDFAKPTLRQIMAHFSQAAESYIEFRNSTEKYMPRYGLQRNLTDYGLARYAFDFYRLTSKTPARAREAHMQMKAAAIRGKSNHMFGLDGNVGTDEENTERHTANDVNRNMHHIAGARF</sequence>
<name>POLG_CYVV</name>
<organism>
    <name type="scientific">Clover yellow vein virus</name>
    <dbReference type="NCBI Taxonomy" id="12198"/>
    <lineage>
        <taxon>Viruses</taxon>
        <taxon>Riboviria</taxon>
        <taxon>Orthornavirae</taxon>
        <taxon>Pisuviricota</taxon>
        <taxon>Stelpaviricetes</taxon>
        <taxon>Patatavirales</taxon>
        <taxon>Potyviridae</taxon>
        <taxon>Potyvirus</taxon>
        <taxon>Potyvirus trifolii</taxon>
    </lineage>
</organism>
<proteinExistence type="inferred from homology"/>
<organismHost>
    <name type="scientific">Coriandrum sativum</name>
    <name type="common">Coriander</name>
    <name type="synonym">Chinese parsley</name>
    <dbReference type="NCBI Taxonomy" id="4047"/>
</organismHost>
<organismHost>
    <name type="scientific">Daucus carota</name>
    <name type="common">Wild carrot</name>
    <dbReference type="NCBI Taxonomy" id="4039"/>
</organismHost>
<organismHost>
    <name type="scientific">Glycine max</name>
    <name type="common">Soybean</name>
    <name type="synonym">Glycine hispida</name>
    <dbReference type="NCBI Taxonomy" id="3847"/>
</organismHost>
<organismHost>
    <name type="scientific">Limonium sinuatum</name>
    <dbReference type="NCBI Taxonomy" id="70371"/>
</organismHost>
<organismHost>
    <name type="scientific">Lupinus luteus</name>
    <name type="common">European yellow lupine</name>
    <dbReference type="NCBI Taxonomy" id="3873"/>
</organismHost>
<organismHost>
    <name type="scientific">Pisum sativum</name>
    <name type="common">Garden pea</name>
    <name type="synonym">Lathyrus oleraceus</name>
    <dbReference type="NCBI Taxonomy" id="3888"/>
</organismHost>
<organismHost>
    <name type="scientific">Trifolium hybridum</name>
    <name type="common">Alsike clover</name>
    <dbReference type="NCBI Taxonomy" id="74517"/>
</organismHost>
<organismHost>
    <name type="scientific">Trifolium incarnatum</name>
    <name type="common">Crimson clover</name>
    <dbReference type="NCBI Taxonomy" id="60916"/>
</organismHost>
<organismHost>
    <name type="scientific">Trifolium pratense</name>
    <name type="common">Red clover</name>
    <dbReference type="NCBI Taxonomy" id="57577"/>
</organismHost>
<organismHost>
    <name type="scientific">Trifolium repens</name>
    <name type="common">Creeping white clover</name>
    <dbReference type="NCBI Taxonomy" id="3899"/>
</organismHost>
<organismHost>
    <name type="scientific">Trifolium subterraneum</name>
    <name type="common">Subterranean clover</name>
    <dbReference type="NCBI Taxonomy" id="3900"/>
</organismHost>
<organismHost>
    <name type="scientific">Trifolium vesiculosum</name>
    <dbReference type="NCBI Taxonomy" id="97047"/>
</organismHost>
<comment type="function">
    <molecule>Nuclear inclusion protein B</molecule>
    <text>An RNA-dependent RNA polymerase that plays an essential role in the virus replication.</text>
</comment>
<comment type="function">
    <molecule>Capsid protein</molecule>
    <text evidence="2">Involved in aphid transmission, cell-to-cell and systemis movement, encapsidation of the viral RNA and in the regulation of viral RNA amplification.</text>
</comment>
<comment type="catalytic activity">
    <reaction evidence="3">
        <text>RNA(n) + a ribonucleoside 5'-triphosphate = RNA(n+1) + diphosphate</text>
        <dbReference type="Rhea" id="RHEA:21248"/>
        <dbReference type="Rhea" id="RHEA-COMP:14527"/>
        <dbReference type="Rhea" id="RHEA-COMP:17342"/>
        <dbReference type="ChEBI" id="CHEBI:33019"/>
        <dbReference type="ChEBI" id="CHEBI:61557"/>
        <dbReference type="ChEBI" id="CHEBI:140395"/>
        <dbReference type="EC" id="2.7.7.48"/>
    </reaction>
</comment>
<comment type="subcellular location">
    <molecule>Capsid protein</molecule>
    <subcellularLocation>
        <location evidence="5">Virion</location>
    </subcellularLocation>
</comment>
<comment type="PTM">
    <text evidence="1">Genome polyprotein of potyviruses undergoes post-translational proteolytic processing by the main proteinase NIa-pro resulting in the production of at least ten individual proteins. The P1 proteinase and the HC-pro cleave only their respective C-termini autocatalytically. 6K1 is essential for proper proteolytic separation of P3 from CI (By similarity).</text>
</comment>
<comment type="similarity">
    <text evidence="5">Belongs to the potyviridae genome polyprotein family.</text>
</comment>
<feature type="chain" id="PRO_0000040266" description="Nuclear inclusion protein B" evidence="1">
    <location>
        <begin position="1" status="less than"/>
        <end position="120"/>
    </location>
</feature>
<feature type="chain" id="PRO_0000419997" description="Genome polyprotein">
    <location>
        <begin position="1"/>
        <end position="391"/>
    </location>
</feature>
<feature type="chain" id="PRO_0000040267" description="Capsid protein" evidence="1">
    <location>
        <begin position="121"/>
        <end position="391"/>
    </location>
</feature>
<feature type="region of interest" description="Disordered" evidence="4">
    <location>
        <begin position="127"/>
        <end position="165"/>
    </location>
</feature>
<feature type="compositionally biased region" description="Basic and acidic residues" evidence="4">
    <location>
        <begin position="127"/>
        <end position="145"/>
    </location>
</feature>
<feature type="site" description="Cleavage; by NIa-pro" evidence="1">
    <location>
        <begin position="120"/>
        <end position="121"/>
    </location>
</feature>
<feature type="non-terminal residue">
    <location>
        <position position="1"/>
    </location>
</feature>
<reference key="1">
    <citation type="journal article" date="1991" name="Intervirology">
        <title>Relatedness of the nucleotide sequence of the 3'-terminal region of clover yellow vein potyvirus RNA to bean yellow mosaic potyvirus RNA.</title>
        <authorList>
            <person name="Uyeda I."/>
            <person name="Takahashi T."/>
            <person name="Shikata E."/>
        </authorList>
    </citation>
    <scope>NUCLEOTIDE SEQUENCE [GENOMIC RNA]</scope>
    <source>
        <strain>Isolate No. 30</strain>
    </source>
</reference>
<reference key="2">
    <citation type="submission" date="1996-06" db="EMBL/GenBank/DDBJ databases">
        <authorList>
            <person name="Takahashi Y."/>
            <person name="Uyeda I."/>
        </authorList>
    </citation>
    <scope>SEQUENCE REVISION</scope>
</reference>
<reference key="3">
    <citation type="journal article" date="2001" name="Virus Res.">
        <title>Potyvirus proteins: a wealth of functions.</title>
        <authorList>
            <person name="Urcuqui-Inchima S."/>
            <person name="Haenni A.L."/>
            <person name="Bernardi F."/>
        </authorList>
    </citation>
    <scope>REVIEW</scope>
</reference>
<dbReference type="EC" id="2.7.7.48"/>
<dbReference type="EMBL" id="D86044">
    <property type="protein sequence ID" value="BAA12975.1"/>
    <property type="molecule type" value="Genomic_RNA"/>
</dbReference>
<dbReference type="PIR" id="JQ1056">
    <property type="entry name" value="JQ0461"/>
</dbReference>
<dbReference type="SMR" id="P20177"/>
<dbReference type="GO" id="GO:0019028">
    <property type="term" value="C:viral capsid"/>
    <property type="evidence" value="ECO:0007669"/>
    <property type="project" value="UniProtKB-KW"/>
</dbReference>
<dbReference type="GO" id="GO:0003968">
    <property type="term" value="F:RNA-directed RNA polymerase activity"/>
    <property type="evidence" value="ECO:0007669"/>
    <property type="project" value="UniProtKB-KW"/>
</dbReference>
<dbReference type="InterPro" id="IPR043502">
    <property type="entry name" value="DNA/RNA_pol_sf"/>
</dbReference>
<dbReference type="InterPro" id="IPR001592">
    <property type="entry name" value="Poty_coat"/>
</dbReference>
<dbReference type="Pfam" id="PF00767">
    <property type="entry name" value="Poty_coat"/>
    <property type="match status" value="1"/>
</dbReference>
<dbReference type="SUPFAM" id="SSF56672">
    <property type="entry name" value="DNA/RNA polymerases"/>
    <property type="match status" value="1"/>
</dbReference>
<keyword id="KW-0167">Capsid protein</keyword>
<keyword id="KW-0548">Nucleotidyltransferase</keyword>
<keyword id="KW-0696">RNA-directed RNA polymerase</keyword>
<keyword id="KW-0808">Transferase</keyword>
<keyword id="KW-0693">Viral RNA replication</keyword>
<keyword id="KW-0946">Virion</keyword>
<protein>
    <recommendedName>
        <fullName>Genome polyprotein</fullName>
    </recommendedName>
    <component>
        <recommendedName>
            <fullName>Nuclear inclusion protein B</fullName>
            <shortName>NI-B</shortName>
            <shortName>NIB</shortName>
        </recommendedName>
        <alternativeName>
            <fullName>RNA-directed RNA polymerase</fullName>
            <ecNumber>2.7.7.48</ecNumber>
        </alternativeName>
    </component>
    <component>
        <recommendedName>
            <fullName>Capsid protein</fullName>
            <shortName>CP</shortName>
        </recommendedName>
        <alternativeName>
            <fullName>Coat protein</fullName>
        </alternativeName>
    </component>
</protein>
<accession>P20177</accession>
<accession>Q66344</accession>